<protein>
    <recommendedName>
        <fullName evidence="3">Kynurenine formamidase avaC</fullName>
        <shortName evidence="3">KFA</shortName>
        <shortName evidence="4">KFase</shortName>
        <ecNumber evidence="2">3.5.1.9</ecNumber>
    </recommendedName>
    <alternativeName>
        <fullName evidence="3">Ava biosynthesis cluster protein C</fullName>
    </alternativeName>
</protein>
<comment type="function">
    <text evidence="2">Kynurenine formamidase; part of the cluster that mediates the biosynthesis of a highly modified cyclo-arginine-tryptophan dipeptide (cRW) (PubMed:36702957). Within the pathway, avaC catalyzes the deformylation of the cyclo-Arg-formylkynurenine iketopiperazine (DKP), produced by the FAD-dependent monooxygenase avaB (PubMed:36702957). The first step of the pathway is perfornmed by the arginine-containing cyclodipeptide synthase (RCPDS) avaA that acts as the scaffold-generating enzyme and is responsible for formation of the cyclo-Arg-Trp (cRW) diketopiperazine. AvaB then acts as a multifunctional flavoenzyme that is responsible for generating the cyclo-Arg-formylkynurenine DKP, which can be deformylated by avaC. AvaB then further catalyzes an additional N-oxidation followed by cyclization and dehydration. The next step is an N-acetylation of the guanidine group catalyzed by the arginine N-acetyltransferase avaD. The roles of the additional enzymes identified within the ava cluster still have to be determined (PubMed:36702957).</text>
</comment>
<comment type="catalytic activity">
    <reaction evidence="2">
        <text>N-formyl-L-kynurenine + H2O = L-kynurenine + formate + H(+)</text>
        <dbReference type="Rhea" id="RHEA:13009"/>
        <dbReference type="ChEBI" id="CHEBI:15377"/>
        <dbReference type="ChEBI" id="CHEBI:15378"/>
        <dbReference type="ChEBI" id="CHEBI:15740"/>
        <dbReference type="ChEBI" id="CHEBI:57959"/>
        <dbReference type="ChEBI" id="CHEBI:58629"/>
        <dbReference type="EC" id="3.5.1.9"/>
    </reaction>
    <physiologicalReaction direction="left-to-right" evidence="2">
        <dbReference type="Rhea" id="RHEA:13010"/>
    </physiologicalReaction>
</comment>
<comment type="pathway">
    <text evidence="2">Secondary metabolite metabolism.</text>
</comment>
<comment type="similarity">
    <text evidence="4">Belongs to the kynurenine formamidase family.</text>
</comment>
<gene>
    <name evidence="3" type="primary">avaC</name>
</gene>
<organism>
    <name type="scientific">Aspergillus versicolor</name>
    <dbReference type="NCBI Taxonomy" id="46472"/>
    <lineage>
        <taxon>Eukaryota</taxon>
        <taxon>Fungi</taxon>
        <taxon>Dikarya</taxon>
        <taxon>Ascomycota</taxon>
        <taxon>Pezizomycotina</taxon>
        <taxon>Eurotiomycetes</taxon>
        <taxon>Eurotiomycetidae</taxon>
        <taxon>Eurotiales</taxon>
        <taxon>Aspergillaceae</taxon>
        <taxon>Aspergillus</taxon>
        <taxon>Aspergillus subgen. Nidulantes</taxon>
    </lineage>
</organism>
<keyword id="KW-0378">Hydrolase</keyword>
<sequence length="284" mass="31503">MSQQYPQTNDVPYLFSNTSTAYHTVDICKVNTSLKDSVPRFWLIYIHGGGWSDPNIQANTFSQIRDELLKEKDILAHISGIAAVNYRLSGDPSEGRNARYPDHLDDVKRAIGFLDSRYGFEDRYIVVGHSAGATLAFQLAMEPETSSLPTPKKPLAILGASGIYDLRRLLNSIWHVVKYREEYVHMLEGAFGPGGFAYGEQSEGRCSSEWDLASPAKATSYGSSWCNAQLAMLVHSPDDELVPLEQSTQFATVLESSLPPGVVQTRFDLAGSHDDIWRKPEGIT</sequence>
<evidence type="ECO:0000250" key="1">
    <source>
        <dbReference type="UniProtKB" id="A5DNX8"/>
    </source>
</evidence>
<evidence type="ECO:0000269" key="2">
    <source>
    </source>
</evidence>
<evidence type="ECO:0000303" key="3">
    <source>
    </source>
</evidence>
<evidence type="ECO:0000305" key="4"/>
<dbReference type="EC" id="3.5.1.9" evidence="2"/>
<dbReference type="EMBL" id="OP596311">
    <property type="protein sequence ID" value="UZP48215.1"/>
    <property type="molecule type" value="Genomic_DNA"/>
</dbReference>
<dbReference type="SMR" id="P9WEK4"/>
<dbReference type="GO" id="GO:0016787">
    <property type="term" value="F:hydrolase activity"/>
    <property type="evidence" value="ECO:0007669"/>
    <property type="project" value="UniProtKB-KW"/>
</dbReference>
<dbReference type="Gene3D" id="3.40.50.1820">
    <property type="entry name" value="alpha/beta hydrolase"/>
    <property type="match status" value="1"/>
</dbReference>
<dbReference type="InterPro" id="IPR029058">
    <property type="entry name" value="AB_hydrolase_fold"/>
</dbReference>
<dbReference type="InterPro" id="IPR049492">
    <property type="entry name" value="BD-FAE-like_dom"/>
</dbReference>
<dbReference type="InterPro" id="IPR050300">
    <property type="entry name" value="GDXG_lipolytic_enzyme"/>
</dbReference>
<dbReference type="PANTHER" id="PTHR48081">
    <property type="entry name" value="AB HYDROLASE SUPERFAMILY PROTEIN C4A8.06C"/>
    <property type="match status" value="1"/>
</dbReference>
<dbReference type="PANTHER" id="PTHR48081:SF33">
    <property type="entry name" value="KYNURENINE FORMAMIDASE"/>
    <property type="match status" value="1"/>
</dbReference>
<dbReference type="Pfam" id="PF20434">
    <property type="entry name" value="BD-FAE"/>
    <property type="match status" value="1"/>
</dbReference>
<dbReference type="SUPFAM" id="SSF53474">
    <property type="entry name" value="alpha/beta-Hydrolases"/>
    <property type="match status" value="1"/>
</dbReference>
<reference key="1">
    <citation type="journal article" date="2023" name="Nat. Chem. Biol.">
        <title>Genome mining for unknown-unknown natural products.</title>
        <authorList>
            <person name="Yee D.A."/>
            <person name="Niwa K."/>
            <person name="Perlatti B."/>
            <person name="Chen M."/>
            <person name="Li Y."/>
            <person name="Tang Y."/>
        </authorList>
    </citation>
    <scope>NUCLEOTIDE SEQUENCE [GENOMIC DNA]</scope>
    <scope>FUNCTION</scope>
    <scope>CATALYTIC ACTIVITY</scope>
    <scope>PATHWAY</scope>
    <source>
        <strain>dI-29</strain>
    </source>
</reference>
<name>AVAC_ASPVE</name>
<accession>P9WEK4</accession>
<proteinExistence type="evidence at protein level"/>
<feature type="chain" id="PRO_0000461016" description="Kynurenine formamidase avaC">
    <location>
        <begin position="1"/>
        <end position="284"/>
    </location>
</feature>
<feature type="short sequence motif" description="HGGXW" evidence="1">
    <location>
        <begin position="47"/>
        <end position="51"/>
    </location>
</feature>
<feature type="active site" description="Nucleophile" evidence="1">
    <location>
        <position position="130"/>
    </location>
</feature>